<protein>
    <recommendedName>
        <fullName>Histone H2B.3, sperm</fullName>
    </recommendedName>
</protein>
<comment type="function">
    <text>Core component of nucleosome. Nucleosomes wrap and compact DNA into chromatin, limiting DNA accessibility to the cellular machineries which require DNA as a template. Histones thereby play a central role in transcription regulation, DNA repair, DNA replication and chromosomal stability. DNA accessibility is regulated via a complex set of post-translational modifications of histones, also called histone code, and nucleosome remodeling.</text>
</comment>
<comment type="subunit">
    <text>The nucleosome is a histone octamer containing two molecules each of H2A, H2B, H3 and H4 assembled in one H3-H4 heterotetramer and two H2A-H2B heterodimers. The octamer wraps approximately 147 bp of DNA.</text>
</comment>
<comment type="subcellular location">
    <subcellularLocation>
        <location>Nucleus</location>
    </subcellularLocation>
    <subcellularLocation>
        <location>Chromosome</location>
    </subcellularLocation>
</comment>
<comment type="domain">
    <text>Contains 6 SPKK motifs which may interact with the minor groove of A/T-rich DNA sites. Phosphorylation of this motif may regulate DNA binding. This motif is reiterated in both termini of histone H1 and in the C-terminus of plant H2A, but its presence in the N-terminus seems to be unique to sea urchin histones H2B.</text>
</comment>
<comment type="PTM">
    <text evidence="1">Monoubiquitination of Lys-144 gives a specific tag for epigenetic transcriptional activation and is also prerequisite for histone H3 'Lys-4' and 'Lys-79' methylation.</text>
</comment>
<comment type="PTM">
    <text evidence="1">Phosphorylated on SPKK motifs 4, 5 and 6; which may regulate DNA binding. Dephosphorylated during maturation of spermatids to mature sperm and rephosphorylated at fertilization (By similarity).</text>
</comment>
<comment type="PTM">
    <text evidence="1">GlcNAcylation at Ser-136 promotes monoubiquitination of Lys-144. It fluctuates in response to extracellular glucose, and associates with transcribed genes (By similarity).</text>
</comment>
<comment type="similarity">
    <text evidence="4">Belongs to the histone H2B family.</text>
</comment>
<organism>
    <name type="scientific">Parechinus angulosus</name>
    <name type="common">Angulate sea urchin</name>
    <name type="synonym">Cidaris angulosus</name>
    <dbReference type="NCBI Taxonomy" id="7658"/>
    <lineage>
        <taxon>Eukaryota</taxon>
        <taxon>Metazoa</taxon>
        <taxon>Echinodermata</taxon>
        <taxon>Eleutherozoa</taxon>
        <taxon>Echinozoa</taxon>
        <taxon>Echinoidea</taxon>
        <taxon>Euechinoidea</taxon>
        <taxon>Echinacea</taxon>
        <taxon>Camarodonta</taxon>
        <taxon>Echinidea</taxon>
        <taxon>Echinidae</taxon>
        <taxon>Parechinus</taxon>
    </lineage>
</organism>
<name>H2BS3_PARAN</name>
<proteinExistence type="evidence at protein level"/>
<evidence type="ECO:0000250" key="1"/>
<evidence type="ECO:0000256" key="2">
    <source>
        <dbReference type="SAM" id="MobiDB-lite"/>
    </source>
</evidence>
<evidence type="ECO:0000269" key="3">
    <source>
    </source>
</evidence>
<evidence type="ECO:0000305" key="4"/>
<dbReference type="PIR" id="A02620">
    <property type="entry name" value="HSUR8P"/>
</dbReference>
<dbReference type="SMR" id="P02292"/>
<dbReference type="GO" id="GO:0000786">
    <property type="term" value="C:nucleosome"/>
    <property type="evidence" value="ECO:0007669"/>
    <property type="project" value="UniProtKB-KW"/>
</dbReference>
<dbReference type="GO" id="GO:0005634">
    <property type="term" value="C:nucleus"/>
    <property type="evidence" value="ECO:0007669"/>
    <property type="project" value="UniProtKB-SubCell"/>
</dbReference>
<dbReference type="GO" id="GO:0003677">
    <property type="term" value="F:DNA binding"/>
    <property type="evidence" value="ECO:0007669"/>
    <property type="project" value="UniProtKB-KW"/>
</dbReference>
<dbReference type="GO" id="GO:0046982">
    <property type="term" value="F:protein heterodimerization activity"/>
    <property type="evidence" value="ECO:0007669"/>
    <property type="project" value="InterPro"/>
</dbReference>
<dbReference type="GO" id="GO:0030527">
    <property type="term" value="F:structural constituent of chromatin"/>
    <property type="evidence" value="ECO:0007669"/>
    <property type="project" value="InterPro"/>
</dbReference>
<dbReference type="CDD" id="cd22910">
    <property type="entry name" value="HFD_H2B"/>
    <property type="match status" value="1"/>
</dbReference>
<dbReference type="FunFam" id="1.10.20.10:FF:000016">
    <property type="entry name" value="Histone H2B"/>
    <property type="match status" value="1"/>
</dbReference>
<dbReference type="Gene3D" id="1.10.20.10">
    <property type="entry name" value="Histone, subunit A"/>
    <property type="match status" value="1"/>
</dbReference>
<dbReference type="InterPro" id="IPR009072">
    <property type="entry name" value="Histone-fold"/>
</dbReference>
<dbReference type="InterPro" id="IPR007125">
    <property type="entry name" value="Histone_H2A/H2B/H3"/>
</dbReference>
<dbReference type="InterPro" id="IPR000558">
    <property type="entry name" value="Histone_H2B"/>
</dbReference>
<dbReference type="InterPro" id="IPR055333">
    <property type="entry name" value="HISTONE_H2B_site"/>
</dbReference>
<dbReference type="PANTHER" id="PTHR23428">
    <property type="entry name" value="HISTONE H2B"/>
    <property type="match status" value="1"/>
</dbReference>
<dbReference type="Pfam" id="PF00125">
    <property type="entry name" value="Histone"/>
    <property type="match status" value="1"/>
</dbReference>
<dbReference type="PRINTS" id="PR00621">
    <property type="entry name" value="HISTONEH2B"/>
</dbReference>
<dbReference type="SMART" id="SM00427">
    <property type="entry name" value="H2B"/>
    <property type="match status" value="1"/>
</dbReference>
<dbReference type="SUPFAM" id="SSF47113">
    <property type="entry name" value="Histone-fold"/>
    <property type="match status" value="1"/>
</dbReference>
<dbReference type="PROSITE" id="PS00357">
    <property type="entry name" value="HISTONE_H2B"/>
    <property type="match status" value="1"/>
</dbReference>
<sequence length="149" mass="16519">MPRSPAKTSPRKGSPRKGSPRKGSPSRKASPKRGGKGAKRAGKGGRRRRVVKRRRRRRESYGIYIYKVLKQVHPDTGISSRAMSVMNSFVNDVFERIASEASRLTSANRRSTVSSREIQTAVRLLLPGELAKHAVSEGTKAVTKYTTSR</sequence>
<keyword id="KW-0158">Chromosome</keyword>
<keyword id="KW-0903">Direct protein sequencing</keyword>
<keyword id="KW-0238">DNA-binding</keyword>
<keyword id="KW-0325">Glycoprotein</keyword>
<keyword id="KW-1017">Isopeptide bond</keyword>
<keyword id="KW-0544">Nucleosome core</keyword>
<keyword id="KW-0539">Nucleus</keyword>
<keyword id="KW-0597">Phosphoprotein</keyword>
<keyword id="KW-0832">Ubl conjugation</keyword>
<accession>P02292</accession>
<feature type="initiator methionine" description="Removed" evidence="3">
    <location>
        <position position="1"/>
    </location>
</feature>
<feature type="chain" id="PRO_0000071890" description="Histone H2B.3, sperm">
    <location>
        <begin position="2"/>
        <end position="149"/>
    </location>
</feature>
<feature type="region of interest" description="Disordered" evidence="2">
    <location>
        <begin position="1"/>
        <end position="57"/>
    </location>
</feature>
<feature type="short sequence motif" description="SPKK motif 1">
    <location>
        <begin position="4"/>
        <end position="7"/>
    </location>
</feature>
<feature type="short sequence motif" description="SPKK motif 2">
    <location>
        <begin position="9"/>
        <end position="12"/>
    </location>
</feature>
<feature type="short sequence motif" description="SPKK motif 3">
    <location>
        <begin position="14"/>
        <end position="17"/>
    </location>
</feature>
<feature type="short sequence motif" description="SPKK motif 4">
    <location>
        <begin position="19"/>
        <end position="22"/>
    </location>
</feature>
<feature type="short sequence motif" description="SPKK motif 5">
    <location>
        <begin position="24"/>
        <end position="27"/>
    </location>
</feature>
<feature type="short sequence motif" description="SPKK motif 6">
    <location>
        <begin position="30"/>
        <end position="33"/>
    </location>
</feature>
<feature type="compositionally biased region" description="Basic residues" evidence="2">
    <location>
        <begin position="9"/>
        <end position="20"/>
    </location>
</feature>
<feature type="compositionally biased region" description="Basic residues" evidence="2">
    <location>
        <begin position="29"/>
        <end position="57"/>
    </location>
</feature>
<feature type="modified residue" description="Phosphoserine" evidence="1">
    <location>
        <position position="19"/>
    </location>
</feature>
<feature type="modified residue" description="Phosphoserine" evidence="1">
    <location>
        <position position="24"/>
    </location>
</feature>
<feature type="modified residue" description="Phosphoserine" evidence="1">
    <location>
        <position position="30"/>
    </location>
</feature>
<feature type="glycosylation site" description="O-linked (GlcNAc) serine" evidence="1">
    <location>
        <position position="136"/>
    </location>
</feature>
<feature type="cross-link" description="Glycyl lysine isopeptide (Lys-Gly) (interchain with G-Cter in ubiquitin)" evidence="1">
    <location>
        <position position="144"/>
    </location>
</feature>
<reference key="1">
    <citation type="journal article" date="1978" name="Eur. J. Biochem.">
        <title>The complete amino-acid sequence of histone H2B(3) from sperm of the sea urchin Parechinus angulosus.</title>
        <authorList>
            <person name="Strickland M."/>
            <person name="Strickland W.N."/>
            <person name="Brandt W.F."/>
            <person name="von Holt C."/>
            <person name="Wittmann-Liebold B."/>
            <person name="Lehmann A."/>
        </authorList>
    </citation>
    <scope>PROTEIN SEQUENCE OF 2-149</scope>
</reference>